<name>RB6I2_MOUSE</name>
<feature type="chain" id="PRO_0000097177" description="ELKS/Rab6-interacting/CAST family member 1">
    <location>
        <begin position="1"/>
        <end position="1120"/>
    </location>
</feature>
<feature type="domain" description="FIP-RBD" evidence="5">
    <location>
        <begin position="1050"/>
        <end position="1112"/>
    </location>
</feature>
<feature type="region of interest" description="Disordered" evidence="6">
    <location>
        <begin position="1"/>
        <end position="54"/>
    </location>
</feature>
<feature type="region of interest" description="Disordered" evidence="6">
    <location>
        <begin position="801"/>
        <end position="840"/>
    </location>
</feature>
<feature type="coiled-coil region" evidence="4">
    <location>
        <begin position="144"/>
        <end position="992"/>
    </location>
</feature>
<feature type="coiled-coil region" evidence="4">
    <location>
        <begin position="1060"/>
        <end position="1104"/>
    </location>
</feature>
<feature type="compositionally biased region" description="Low complexity" evidence="6">
    <location>
        <begin position="13"/>
        <end position="28"/>
    </location>
</feature>
<feature type="compositionally biased region" description="Gly residues" evidence="6">
    <location>
        <begin position="40"/>
        <end position="51"/>
    </location>
</feature>
<feature type="compositionally biased region" description="Basic and acidic residues" evidence="6">
    <location>
        <begin position="801"/>
        <end position="824"/>
    </location>
</feature>
<feature type="modified residue" description="N6-acetyllysine" evidence="17">
    <location>
        <position position="10"/>
    </location>
</feature>
<feature type="modified residue" description="Phosphoserine" evidence="3">
    <location>
        <position position="17"/>
    </location>
</feature>
<feature type="modified residue" description="Phosphoserine" evidence="16">
    <location>
        <position position="21"/>
    </location>
</feature>
<feature type="modified residue" description="Phosphoserine" evidence="3">
    <location>
        <position position="37"/>
    </location>
</feature>
<feature type="modified residue" description="Phosphothreonine" evidence="3">
    <location>
        <position position="38"/>
    </location>
</feature>
<feature type="modified residue" description="Phosphoserine" evidence="16">
    <location>
        <position position="55"/>
    </location>
</feature>
<feature type="modified residue" description="Phosphoserine" evidence="16">
    <location>
        <position position="75"/>
    </location>
</feature>
<feature type="modified residue" description="Phosphoserine" evidence="3">
    <location>
        <position position="94"/>
    </location>
</feature>
<feature type="modified residue" description="Phosphoserine" evidence="16">
    <location>
        <position position="824"/>
    </location>
</feature>
<feature type="modified residue" description="Phosphoserine" evidence="2">
    <location>
        <position position="1009"/>
    </location>
</feature>
<feature type="modified residue" description="Phosphothreonine" evidence="3">
    <location>
        <position position="1050"/>
    </location>
</feature>
<feature type="splice variant" id="VSP_011456" description="In isoform 3." evidence="13">
    <location>
        <begin position="1"/>
        <end position="151"/>
    </location>
</feature>
<feature type="splice variant" id="VSP_011457" description="In isoform 3." evidence="13">
    <location>
        <begin position="440"/>
        <end position="467"/>
    </location>
</feature>
<feature type="splice variant" id="VSP_011458" description="In isoform 3." evidence="13">
    <original>DALRLRLEEKETMLNKKTKQIQD</original>
    <variation>KSFCDLCRIQSIPSFILLYICYV</variation>
    <location>
        <begin position="525"/>
        <end position="547"/>
    </location>
</feature>
<feature type="splice variant" id="VSP_011459" description="In isoform 3." evidence="13">
    <location>
        <begin position="548"/>
        <end position="1120"/>
    </location>
</feature>
<feature type="splice variant" id="VSP_011460" description="In isoform 2." evidence="10 11">
    <location>
        <begin position="834"/>
        <end position="877"/>
    </location>
</feature>
<feature type="splice variant" id="VSP_011462" description="In isoform 2." evidence="10 11">
    <original>IIQPLLEL</original>
    <variation>DEEEGIWA</variation>
    <location>
        <begin position="1013"/>
        <end position="1020"/>
    </location>
</feature>
<feature type="splice variant" id="VSP_011463" description="In isoform 2." evidence="10 11">
    <location>
        <begin position="1021"/>
        <end position="1120"/>
    </location>
</feature>
<feature type="sequence conflict" description="In Ref. 3; BAC35542." evidence="14" ref="3">
    <original>D</original>
    <variation>G</variation>
    <location>
        <position position="121"/>
    </location>
</feature>
<feature type="sequence conflict" description="In Ref. 4; BAC65719." evidence="14" ref="4">
    <original>Q</original>
    <variation>K</variation>
    <location>
        <position position="1070"/>
    </location>
</feature>
<feature type="modified residue" description="Phosphoserine" evidence="16">
    <location sequence="Q99MI1-2">
        <position position="965"/>
    </location>
</feature>
<protein>
    <recommendedName>
        <fullName evidence="14">ELKS/Rab6-interacting/CAST family member 1</fullName>
        <shortName>ERC-1</shortName>
    </recommendedName>
    <alternativeName>
        <fullName evidence="12">CAZ-associated structural protein 2</fullName>
        <shortName evidence="12">CAST2</shortName>
    </alternativeName>
    <alternativeName>
        <fullName evidence="10">Rab6-interacting protein 2</fullName>
    </alternativeName>
</protein>
<gene>
    <name evidence="15" type="primary">Erc1</name>
    <name evidence="12" type="synonym">Cast2</name>
    <name type="synonym">Kiaa1081</name>
    <name evidence="10" type="synonym">Rab6ip2</name>
</gene>
<comment type="function">
    <text evidence="1">Regulatory subunit of the IKK complex. Probably recruits IkappaBalpha/NFKBIA to the complex (By similarity). May be involved in the organization of the cytomatrix at the nerve terminals active zone (CAZ) which regulates neurotransmitter release. May be involved in vesicle trafficking at the CAZ. May be involved in Rab-6 regulated endosomes to Golgi transport.</text>
</comment>
<comment type="subunit">
    <text evidence="1 3">Interacts with the GTB-bound forms of RAB6A isoform 1 and isoform 2 and with RAB6B. The interaction was strongest with RAB6B, followed by RAB6A isoform 2 and weakest with RAB6A isoform 1. Part of a complex with CHUK, IKBKB and IKBKG. Interacts with CHUK, IKBKB and IKBKG. The interaction with IKBKG is independent of CHUK and IKBKB. Interacts with NFKBIA (By similarity). Isoform 2 interacts through its C-terminus with the PDZ domains of RIMS1 and RIMS2. Interacts with ERC2/CAST1 (By similarity). Interacts with SDCCAG8. Part of a cortical microtubule stabilization complex (CMSC) composed of KANK1, PPFIA1, PPFIBP1, ERC1/ELKS, PHLDB2/LL5beta, CLASPs, KIF21A and possibly additional interactors; within CMSCs KANK1 and PHLDB2/LL5beta appear to be the core components for targeting of microtubule-binding proteins KIF21A and CLASPs, whereas PPFIA1, PPFIBP1 and ERC1/ELKS serve as scaffolds for protein clustering.</text>
</comment>
<comment type="subcellular location">
    <subcellularLocation>
        <location evidence="3">Cytoplasm</location>
        <location evidence="3">Cytoskeleton</location>
        <location evidence="3">Microtubule organizing center</location>
        <location evidence="3">Centrosome</location>
    </subcellularLocation>
    <subcellularLocation>
        <location>Cytoplasm</location>
    </subcellularLocation>
    <subcellularLocation>
        <location>Membrane</location>
        <topology>Peripheral membrane protein</topology>
    </subcellularLocation>
    <subcellularLocation>
        <location>Golgi apparatus membrane</location>
        <topology>Peripheral membrane protein</topology>
    </subcellularLocation>
    <subcellularLocation>
        <location evidence="8">Presynaptic active zone</location>
    </subcellularLocation>
    <subcellularLocation>
        <location evidence="9">Cell projection</location>
        <location evidence="9">Podosome</location>
    </subcellularLocation>
    <text evidence="9">Recruited on Golgi membranes by RAB6A in a GTP-dependent manner. Localized to the cortex of myotube podosomes (PubMed:23525008).</text>
</comment>
<comment type="alternative products">
    <event type="alternative splicing"/>
    <isoform>
        <id>Q99MI1-1</id>
        <name>1</name>
        <name>B</name>
        <name>beta</name>
        <sequence type="displayed"/>
    </isoform>
    <isoform>
        <id>Q99MI1-2</id>
        <name>2</name>
        <name>A</name>
        <sequence type="described" ref="VSP_011460 VSP_011462 VSP_011463"/>
    </isoform>
    <isoform>
        <id>Q99MI1-4</id>
        <name>3</name>
        <sequence type="described" ref="VSP_011456 VSP_011457 VSP_011458 VSP_011459"/>
    </isoform>
</comment>
<comment type="tissue specificity">
    <text evidence="7">Widely expressed.</text>
</comment>
<comment type="miscellaneous">
    <molecule>Isoform 2</molecule>
    <text evidence="14">May be produced at very low levels due to a premature stop codon in the mRNA, leading to nonsense-mediated mRNA decay.</text>
</comment>
<comment type="sequence caution" evidence="14">
    <conflict type="miscellaneous discrepancy">
        <sequence resource="EMBL-CDS" id="BAC65719"/>
    </conflict>
    <text>Artifact. Missing internal sequence that does not correspond to an exon-intron boundary.</text>
</comment>
<evidence type="ECO:0000250" key="1"/>
<evidence type="ECO:0000250" key="2">
    <source>
        <dbReference type="UniProtKB" id="Q811U3"/>
    </source>
</evidence>
<evidence type="ECO:0000250" key="3">
    <source>
        <dbReference type="UniProtKB" id="Q8IUD2"/>
    </source>
</evidence>
<evidence type="ECO:0000255" key="4"/>
<evidence type="ECO:0000255" key="5">
    <source>
        <dbReference type="PROSITE-ProRule" id="PRU00844"/>
    </source>
</evidence>
<evidence type="ECO:0000256" key="6">
    <source>
        <dbReference type="SAM" id="MobiDB-lite"/>
    </source>
</evidence>
<evidence type="ECO:0000269" key="7">
    <source>
    </source>
</evidence>
<evidence type="ECO:0000269" key="8">
    <source>
    </source>
</evidence>
<evidence type="ECO:0000269" key="9">
    <source>
    </source>
</evidence>
<evidence type="ECO:0000303" key="10">
    <source>
    </source>
</evidence>
<evidence type="ECO:0000303" key="11">
    <source>
    </source>
</evidence>
<evidence type="ECO:0000303" key="12">
    <source>
    </source>
</evidence>
<evidence type="ECO:0000303" key="13">
    <source>
    </source>
</evidence>
<evidence type="ECO:0000305" key="14"/>
<evidence type="ECO:0000312" key="15">
    <source>
        <dbReference type="MGI" id="MGI:2151013"/>
    </source>
</evidence>
<evidence type="ECO:0007744" key="16">
    <source>
    </source>
</evidence>
<evidence type="ECO:0007744" key="17">
    <source>
    </source>
</evidence>
<dbReference type="EMBL" id="AF340028">
    <property type="protein sequence ID" value="AAK26381.1"/>
    <property type="molecule type" value="mRNA"/>
</dbReference>
<dbReference type="EMBL" id="AF340029">
    <property type="protein sequence ID" value="AAK26382.1"/>
    <property type="molecule type" value="mRNA"/>
</dbReference>
<dbReference type="EMBL" id="AY316692">
    <property type="protein sequence ID" value="AAP83581.1"/>
    <property type="molecule type" value="mRNA"/>
</dbReference>
<dbReference type="EMBL" id="AK048990">
    <property type="protein sequence ID" value="BAC33505.1"/>
    <property type="molecule type" value="mRNA"/>
</dbReference>
<dbReference type="EMBL" id="AK053824">
    <property type="protein sequence ID" value="BAC35542.1"/>
    <property type="molecule type" value="mRNA"/>
</dbReference>
<dbReference type="EMBL" id="AK122437">
    <property type="protein sequence ID" value="BAC65719.1"/>
    <property type="status" value="ALT_SEQ"/>
    <property type="molecule type" value="Transcribed_RNA"/>
</dbReference>
<dbReference type="CCDS" id="CCDS20476.1">
    <molecule id="Q99MI1-4"/>
</dbReference>
<dbReference type="CCDS" id="CCDS39611.1">
    <molecule id="Q99MI1-1"/>
</dbReference>
<dbReference type="RefSeq" id="NP_835186.1">
    <molecule id="Q99MI1-4"/>
    <property type="nucleotide sequence ID" value="NM_178085.3"/>
</dbReference>
<dbReference type="SMR" id="Q99MI1"/>
<dbReference type="BioGRID" id="226265">
    <property type="interactions" value="14"/>
</dbReference>
<dbReference type="FunCoup" id="Q99MI1">
    <property type="interactions" value="1249"/>
</dbReference>
<dbReference type="IntAct" id="Q99MI1">
    <property type="interactions" value="10"/>
</dbReference>
<dbReference type="MINT" id="Q99MI1"/>
<dbReference type="STRING" id="10090.ENSMUSP00000139031"/>
<dbReference type="GlyGen" id="Q99MI1">
    <property type="glycosylation" value="1 site, 1 O-linked glycan (1 site)"/>
</dbReference>
<dbReference type="iPTMnet" id="Q99MI1"/>
<dbReference type="PhosphoSitePlus" id="Q99MI1"/>
<dbReference type="SwissPalm" id="Q99MI1"/>
<dbReference type="jPOST" id="Q99MI1"/>
<dbReference type="PaxDb" id="10090-ENSMUSP00000078534"/>
<dbReference type="PeptideAtlas" id="Q99MI1"/>
<dbReference type="ProteomicsDB" id="254993">
    <molecule id="Q99MI1-1"/>
</dbReference>
<dbReference type="ProteomicsDB" id="254994">
    <molecule id="Q99MI1-2"/>
</dbReference>
<dbReference type="ProteomicsDB" id="254995">
    <molecule id="Q99MI1-4"/>
</dbReference>
<dbReference type="Pumba" id="Q99MI1"/>
<dbReference type="Antibodypedia" id="10295">
    <property type="antibodies" value="174 antibodies from 32 providers"/>
</dbReference>
<dbReference type="Ensembl" id="ENSMUST00000079582.5">
    <molecule id="Q99MI1-4"/>
    <property type="protein sequence ID" value="ENSMUSP00000078534.4"/>
    <property type="gene ID" value="ENSMUSG00000030172.16"/>
</dbReference>
<dbReference type="Ensembl" id="ENSMUST00000184838.8">
    <molecule id="Q99MI1-2"/>
    <property type="protein sequence ID" value="ENSMUSP00000139030.2"/>
    <property type="gene ID" value="ENSMUSG00000030172.16"/>
</dbReference>
<dbReference type="GeneID" id="111173"/>
<dbReference type="KEGG" id="mmu:111173"/>
<dbReference type="UCSC" id="uc009dmn.1">
    <molecule id="Q99MI1-4"/>
    <property type="organism name" value="mouse"/>
</dbReference>
<dbReference type="AGR" id="MGI:2151013"/>
<dbReference type="CTD" id="23085"/>
<dbReference type="MGI" id="MGI:2151013">
    <property type="gene designation" value="Erc1"/>
</dbReference>
<dbReference type="VEuPathDB" id="HostDB:ENSMUSG00000030172"/>
<dbReference type="eggNOG" id="KOG4809">
    <property type="taxonomic scope" value="Eukaryota"/>
</dbReference>
<dbReference type="GeneTree" id="ENSGT00650000093320"/>
<dbReference type="HOGENOM" id="CLU_815229_0_0_1"/>
<dbReference type="InParanoid" id="Q99MI1"/>
<dbReference type="OrthoDB" id="2019763at2759"/>
<dbReference type="PhylomeDB" id="Q99MI1"/>
<dbReference type="BioGRID-ORCS" id="111173">
    <property type="hits" value="1 hit in 63 CRISPR screens"/>
</dbReference>
<dbReference type="CD-CODE" id="CE726F99">
    <property type="entry name" value="Postsynaptic density"/>
</dbReference>
<dbReference type="ChiTaRS" id="Erc1">
    <property type="organism name" value="mouse"/>
</dbReference>
<dbReference type="PRO" id="PR:Q99MI1"/>
<dbReference type="Proteomes" id="UP000000589">
    <property type="component" value="Chromosome 6"/>
</dbReference>
<dbReference type="RNAct" id="Q99MI1">
    <property type="molecule type" value="protein"/>
</dbReference>
<dbReference type="Bgee" id="ENSMUSG00000030172">
    <property type="expression patterns" value="Expressed in undifferentiated genital tubercle and 244 other cell types or tissues"/>
</dbReference>
<dbReference type="ExpressionAtlas" id="Q99MI1">
    <property type="expression patterns" value="baseline and differential"/>
</dbReference>
<dbReference type="GO" id="GO:0070161">
    <property type="term" value="C:anchoring junction"/>
    <property type="evidence" value="ECO:0007669"/>
    <property type="project" value="UniProtKB-KW"/>
</dbReference>
<dbReference type="GO" id="GO:0042995">
    <property type="term" value="C:cell projection"/>
    <property type="evidence" value="ECO:0007669"/>
    <property type="project" value="UniProtKB-KW"/>
</dbReference>
<dbReference type="GO" id="GO:0005813">
    <property type="term" value="C:centrosome"/>
    <property type="evidence" value="ECO:0007669"/>
    <property type="project" value="UniProtKB-SubCell"/>
</dbReference>
<dbReference type="GO" id="GO:0005737">
    <property type="term" value="C:cytoplasm"/>
    <property type="evidence" value="ECO:0000314"/>
    <property type="project" value="MGI"/>
</dbReference>
<dbReference type="GO" id="GO:0098982">
    <property type="term" value="C:GABA-ergic synapse"/>
    <property type="evidence" value="ECO:0000314"/>
    <property type="project" value="SynGO"/>
</dbReference>
<dbReference type="GO" id="GO:0098978">
    <property type="term" value="C:glutamatergic synapse"/>
    <property type="evidence" value="ECO:0000314"/>
    <property type="project" value="SynGO"/>
</dbReference>
<dbReference type="GO" id="GO:0000139">
    <property type="term" value="C:Golgi membrane"/>
    <property type="evidence" value="ECO:0007669"/>
    <property type="project" value="UniProtKB-SubCell"/>
</dbReference>
<dbReference type="GO" id="GO:0002102">
    <property type="term" value="C:podosome"/>
    <property type="evidence" value="ECO:0000314"/>
    <property type="project" value="UniProtKB"/>
</dbReference>
<dbReference type="GO" id="GO:0048786">
    <property type="term" value="C:presynaptic active zone"/>
    <property type="evidence" value="ECO:0007669"/>
    <property type="project" value="UniProtKB-SubCell"/>
</dbReference>
<dbReference type="GO" id="GO:0099523">
    <property type="term" value="C:presynaptic cytosol"/>
    <property type="evidence" value="ECO:0000314"/>
    <property type="project" value="SynGO"/>
</dbReference>
<dbReference type="GO" id="GO:0045202">
    <property type="term" value="C:synapse"/>
    <property type="evidence" value="ECO:0000314"/>
    <property type="project" value="MGI"/>
</dbReference>
<dbReference type="GO" id="GO:0030165">
    <property type="term" value="F:PDZ domain binding"/>
    <property type="evidence" value="ECO:0000250"/>
    <property type="project" value="ParkinsonsUK-UCL"/>
</dbReference>
<dbReference type="GO" id="GO:0031267">
    <property type="term" value="F:small GTPase binding"/>
    <property type="evidence" value="ECO:0000314"/>
    <property type="project" value="MGI"/>
</dbReference>
<dbReference type="GO" id="GO:0098882">
    <property type="term" value="F:structural constituent of presynaptic active zone"/>
    <property type="evidence" value="ECO:0000314"/>
    <property type="project" value="SynGO"/>
</dbReference>
<dbReference type="GO" id="GO:0015031">
    <property type="term" value="P:protein transport"/>
    <property type="evidence" value="ECO:0007669"/>
    <property type="project" value="UniProtKB-KW"/>
</dbReference>
<dbReference type="GO" id="GO:0150037">
    <property type="term" value="P:regulation of calcium-dependent activation of synaptic vesicle fusion"/>
    <property type="evidence" value="ECO:0000314"/>
    <property type="project" value="SynGO"/>
</dbReference>
<dbReference type="GO" id="GO:0099509">
    <property type="term" value="P:regulation of presynaptic cytosolic calcium ion concentration"/>
    <property type="evidence" value="ECO:0000314"/>
    <property type="project" value="SynGO"/>
</dbReference>
<dbReference type="GO" id="GO:0042147">
    <property type="term" value="P:retrograde transport, endosome to Golgi"/>
    <property type="evidence" value="ECO:0000314"/>
    <property type="project" value="MGI"/>
</dbReference>
<dbReference type="GO" id="GO:0016082">
    <property type="term" value="P:synaptic vesicle priming"/>
    <property type="evidence" value="ECO:0000314"/>
    <property type="project" value="SynGO"/>
</dbReference>
<dbReference type="Gene3D" id="1.10.287.1490">
    <property type="match status" value="1"/>
</dbReference>
<dbReference type="Gene3D" id="1.20.5.2440">
    <property type="match status" value="1"/>
</dbReference>
<dbReference type="Gene3D" id="1.20.5.340">
    <property type="match status" value="1"/>
</dbReference>
<dbReference type="InterPro" id="IPR019323">
    <property type="entry name" value="ELKS/CAST"/>
</dbReference>
<dbReference type="InterPro" id="IPR037245">
    <property type="entry name" value="FIP-RBD_C_sf"/>
</dbReference>
<dbReference type="InterPro" id="IPR019018">
    <property type="entry name" value="Rab-bd_FIP-RBD"/>
</dbReference>
<dbReference type="PANTHER" id="PTHR18861">
    <property type="entry name" value="ELKS/RAB6-INTERACTING/CAST PROTEIN"/>
    <property type="match status" value="1"/>
</dbReference>
<dbReference type="PANTHER" id="PTHR18861:SF1">
    <property type="entry name" value="ELKS_RAB6-INTERACTING_CAST FAMILY MEMBER 1"/>
    <property type="match status" value="1"/>
</dbReference>
<dbReference type="Pfam" id="PF10174">
    <property type="entry name" value="Cast"/>
    <property type="match status" value="1"/>
</dbReference>
<dbReference type="Pfam" id="PF09457">
    <property type="entry name" value="RBD-FIP"/>
    <property type="match status" value="1"/>
</dbReference>
<dbReference type="SUPFAM" id="SSF144270">
    <property type="entry name" value="Eferin C-derminal domain-like"/>
    <property type="match status" value="1"/>
</dbReference>
<dbReference type="PROSITE" id="PS51511">
    <property type="entry name" value="FIP_RBD"/>
    <property type="match status" value="1"/>
</dbReference>
<sequence>MYGSARSVGKVEPSSQSPGRSPRLPRSPRLGHRRTNSTGGSSGNSVGGGSGKTLSMENIQSLNAAYATSGPMYLSDHENVGAETPKSTMTLGRSGGRLPYGVRMTAMGSSPNIASSGVASDTIAFGEHHLPPVSMASTVPHSLRQARDNTIMDLQTQLKEVLRENDLLRKDVEVKESKLSSSMNSIKTFWSPELKKERALRKDEASKITIWKEQYRVVQEENQHMQMTIQALQDELRIQRDLNQLFQQDSSSRTGEPCVAELTEENFQRLHAEHERQAKELFLLRKTLEEMELRIETQKQTLNARDESIKKLLEMLQSKGLSAKATEEDHERTRRLAEAEMHVHHLESLLEQKEKENNMLREEMHRRFENAPDSAKTKALQTVIEMKDSKISSMERGLRDLEEEIQMLKSNGALSSEEREEEMKQMEVYRSHSKFMKNKVEQLKEELSSKDAQGEELKKRAAGLQSEIGQVKQELSRKDTELLALQTKLETLTNQFSDSKQHIEVLKESLTAKEQRAAILQTEVDALRLRLEEKETMLNKKTKQIQDMAEEKGTQAGEIHDLKDMLDVKERKVNVLQKKIENLQEQLRDKEKQMSSLKERVKSLQADTTNTDTALTTLEEALADKERTIERLKEQRDRDEREKQEEIDTYKKDLKDLREKVSLLQGDLSEKEASLLDIKEHASSLASSGLKKDSRLKTLEIALEQKKEECLKMESQLKKAHEATLEARASPEMSDRIQQLEREISRYKDESSKAQTEVDRLLEILKEVENEKNDKDKKIAELESLTSRQVKDQNKKVANLKHKEQVEKKKSAQMLEEARRREDSLSDSSQQLQDSLRKKDDRIEELEEALRESVQITAEREMVLAQEESARTNAEKQVEELLMAMEKVKQELESMKAKLSSTQQSLAEKETHLTNLRAERRKHLEEVLEMKQEALLAAISEKDANIALLELSSSKKKTQEEVAALKREKDRLVQQLKQQTQNRMKLMADNYEDDHFRSSRSNQTNHKPSPDQIIQPLLELDQNRSKLKLYIGHLTALCHDRDPLILRGLTPPASYNADGEQAAWENELQQMTQEQLQNELEKVEGDNAELQEFANTILQQIADHCPDILEQVVNALEESS</sequence>
<proteinExistence type="evidence at protein level"/>
<reference key="1">
    <citation type="journal article" date="2002" name="Traffic">
        <title>Characterization of novel Rab6-interacting proteins involved in endosome-to-TGN transport.</title>
        <authorList>
            <person name="Monier S."/>
            <person name="Jollivet F."/>
            <person name="Janoueix-Lerosey I."/>
            <person name="Johannes L."/>
            <person name="Goud B."/>
        </authorList>
    </citation>
    <scope>NUCLEOTIDE SEQUENCE [MRNA] (ISOFORMS 1 AND 2)</scope>
    <scope>SUBCELLULAR LOCATION</scope>
    <scope>TISSUE SPECIFICITY</scope>
    <scope>INTERACTION WITH RAB6A AND RAB6B</scope>
</reference>
<reference key="2">
    <citation type="journal article" date="2004" name="Genes Cells">
        <title>CAST2: identification and characterization of a protein structurally related to the presynaptic cytomatrix protein CAST.</title>
        <authorList>
            <person name="Deguchi-Tawarada M."/>
            <person name="Inoue E."/>
            <person name="Takao-Rikitsu E."/>
            <person name="Inoue M."/>
            <person name="Ohtsuka T."/>
            <person name="Takai Y."/>
        </authorList>
    </citation>
    <scope>NUCLEOTIDE SEQUENCE [MRNA] (ISOFORM 1)</scope>
    <scope>SUBCELLULAR LOCATION</scope>
</reference>
<reference key="3">
    <citation type="journal article" date="2005" name="Science">
        <title>The transcriptional landscape of the mammalian genome.</title>
        <authorList>
            <person name="Carninci P."/>
            <person name="Kasukawa T."/>
            <person name="Katayama S."/>
            <person name="Gough J."/>
            <person name="Frith M.C."/>
            <person name="Maeda N."/>
            <person name="Oyama R."/>
            <person name="Ravasi T."/>
            <person name="Lenhard B."/>
            <person name="Wells C."/>
            <person name="Kodzius R."/>
            <person name="Shimokawa K."/>
            <person name="Bajic V.B."/>
            <person name="Brenner S.E."/>
            <person name="Batalov S."/>
            <person name="Forrest A.R."/>
            <person name="Zavolan M."/>
            <person name="Davis M.J."/>
            <person name="Wilming L.G."/>
            <person name="Aidinis V."/>
            <person name="Allen J.E."/>
            <person name="Ambesi-Impiombato A."/>
            <person name="Apweiler R."/>
            <person name="Aturaliya R.N."/>
            <person name="Bailey T.L."/>
            <person name="Bansal M."/>
            <person name="Baxter L."/>
            <person name="Beisel K.W."/>
            <person name="Bersano T."/>
            <person name="Bono H."/>
            <person name="Chalk A.M."/>
            <person name="Chiu K.P."/>
            <person name="Choudhary V."/>
            <person name="Christoffels A."/>
            <person name="Clutterbuck D.R."/>
            <person name="Crowe M.L."/>
            <person name="Dalla E."/>
            <person name="Dalrymple B.P."/>
            <person name="de Bono B."/>
            <person name="Della Gatta G."/>
            <person name="di Bernardo D."/>
            <person name="Down T."/>
            <person name="Engstrom P."/>
            <person name="Fagiolini M."/>
            <person name="Faulkner G."/>
            <person name="Fletcher C.F."/>
            <person name="Fukushima T."/>
            <person name="Furuno M."/>
            <person name="Futaki S."/>
            <person name="Gariboldi M."/>
            <person name="Georgii-Hemming P."/>
            <person name="Gingeras T.R."/>
            <person name="Gojobori T."/>
            <person name="Green R.E."/>
            <person name="Gustincich S."/>
            <person name="Harbers M."/>
            <person name="Hayashi Y."/>
            <person name="Hensch T.K."/>
            <person name="Hirokawa N."/>
            <person name="Hill D."/>
            <person name="Huminiecki L."/>
            <person name="Iacono M."/>
            <person name="Ikeo K."/>
            <person name="Iwama A."/>
            <person name="Ishikawa T."/>
            <person name="Jakt M."/>
            <person name="Kanapin A."/>
            <person name="Katoh M."/>
            <person name="Kawasawa Y."/>
            <person name="Kelso J."/>
            <person name="Kitamura H."/>
            <person name="Kitano H."/>
            <person name="Kollias G."/>
            <person name="Krishnan S.P."/>
            <person name="Kruger A."/>
            <person name="Kummerfeld S.K."/>
            <person name="Kurochkin I.V."/>
            <person name="Lareau L.F."/>
            <person name="Lazarevic D."/>
            <person name="Lipovich L."/>
            <person name="Liu J."/>
            <person name="Liuni S."/>
            <person name="McWilliam S."/>
            <person name="Madan Babu M."/>
            <person name="Madera M."/>
            <person name="Marchionni L."/>
            <person name="Matsuda H."/>
            <person name="Matsuzawa S."/>
            <person name="Miki H."/>
            <person name="Mignone F."/>
            <person name="Miyake S."/>
            <person name="Morris K."/>
            <person name="Mottagui-Tabar S."/>
            <person name="Mulder N."/>
            <person name="Nakano N."/>
            <person name="Nakauchi H."/>
            <person name="Ng P."/>
            <person name="Nilsson R."/>
            <person name="Nishiguchi S."/>
            <person name="Nishikawa S."/>
            <person name="Nori F."/>
            <person name="Ohara O."/>
            <person name="Okazaki Y."/>
            <person name="Orlando V."/>
            <person name="Pang K.C."/>
            <person name="Pavan W.J."/>
            <person name="Pavesi G."/>
            <person name="Pesole G."/>
            <person name="Petrovsky N."/>
            <person name="Piazza S."/>
            <person name="Reed J."/>
            <person name="Reid J.F."/>
            <person name="Ring B.Z."/>
            <person name="Ringwald M."/>
            <person name="Rost B."/>
            <person name="Ruan Y."/>
            <person name="Salzberg S.L."/>
            <person name="Sandelin A."/>
            <person name="Schneider C."/>
            <person name="Schoenbach C."/>
            <person name="Sekiguchi K."/>
            <person name="Semple C.A."/>
            <person name="Seno S."/>
            <person name="Sessa L."/>
            <person name="Sheng Y."/>
            <person name="Shibata Y."/>
            <person name="Shimada H."/>
            <person name="Shimada K."/>
            <person name="Silva D."/>
            <person name="Sinclair B."/>
            <person name="Sperling S."/>
            <person name="Stupka E."/>
            <person name="Sugiura K."/>
            <person name="Sultana R."/>
            <person name="Takenaka Y."/>
            <person name="Taki K."/>
            <person name="Tammoja K."/>
            <person name="Tan S.L."/>
            <person name="Tang S."/>
            <person name="Taylor M.S."/>
            <person name="Tegner J."/>
            <person name="Teichmann S.A."/>
            <person name="Ueda H.R."/>
            <person name="van Nimwegen E."/>
            <person name="Verardo R."/>
            <person name="Wei C.L."/>
            <person name="Yagi K."/>
            <person name="Yamanishi H."/>
            <person name="Zabarovsky E."/>
            <person name="Zhu S."/>
            <person name="Zimmer A."/>
            <person name="Hide W."/>
            <person name="Bult C."/>
            <person name="Grimmond S.M."/>
            <person name="Teasdale R.D."/>
            <person name="Liu E.T."/>
            <person name="Brusic V."/>
            <person name="Quackenbush J."/>
            <person name="Wahlestedt C."/>
            <person name="Mattick J.S."/>
            <person name="Hume D.A."/>
            <person name="Kai C."/>
            <person name="Sasaki D."/>
            <person name="Tomaru Y."/>
            <person name="Fukuda S."/>
            <person name="Kanamori-Katayama M."/>
            <person name="Suzuki M."/>
            <person name="Aoki J."/>
            <person name="Arakawa T."/>
            <person name="Iida J."/>
            <person name="Imamura K."/>
            <person name="Itoh M."/>
            <person name="Kato T."/>
            <person name="Kawaji H."/>
            <person name="Kawagashira N."/>
            <person name="Kawashima T."/>
            <person name="Kojima M."/>
            <person name="Kondo S."/>
            <person name="Konno H."/>
            <person name="Nakano K."/>
            <person name="Ninomiya N."/>
            <person name="Nishio T."/>
            <person name="Okada M."/>
            <person name="Plessy C."/>
            <person name="Shibata K."/>
            <person name="Shiraki T."/>
            <person name="Suzuki S."/>
            <person name="Tagami M."/>
            <person name="Waki K."/>
            <person name="Watahiki A."/>
            <person name="Okamura-Oho Y."/>
            <person name="Suzuki H."/>
            <person name="Kawai J."/>
            <person name="Hayashizaki Y."/>
        </authorList>
    </citation>
    <scope>NUCLEOTIDE SEQUENCE [LARGE SCALE MRNA] (ISOFORM 3)</scope>
    <scope>NUCLEOTIDE SEQUENCE [LARGE SCALE MRNA] OF 1-351 (ISOFORMS 1/2)</scope>
    <source>
        <strain>C57BL/6J</strain>
        <tissue>Cerebellum</tissue>
        <tissue>Eye</tissue>
    </source>
</reference>
<reference key="4">
    <citation type="journal article" date="2003" name="DNA Res.">
        <title>Prediction of the coding sequences of mouse homologues of KIAA gene: II. The complete nucleotide sequences of 400 mouse KIAA-homologous cDNAs identified by screening of terminal sequences of cDNA clones randomly sampled from size-fractionated libraries.</title>
        <authorList>
            <person name="Okazaki N."/>
            <person name="Kikuno R."/>
            <person name="Ohara R."/>
            <person name="Inamoto S."/>
            <person name="Aizawa H."/>
            <person name="Yuasa S."/>
            <person name="Nakajima D."/>
            <person name="Nagase T."/>
            <person name="Ohara O."/>
            <person name="Koga H."/>
        </authorList>
    </citation>
    <scope>NUCLEOTIDE SEQUENCE [LARGE SCALE MRNA] OF 691-1120 (ISOFORM 2)</scope>
    <source>
        <tissue>Brain</tissue>
    </source>
</reference>
<reference key="5">
    <citation type="journal article" date="2010" name="Cell">
        <title>A tissue-specific atlas of mouse protein phosphorylation and expression.</title>
        <authorList>
            <person name="Huttlin E.L."/>
            <person name="Jedrychowski M.P."/>
            <person name="Elias J.E."/>
            <person name="Goswami T."/>
            <person name="Rad R."/>
            <person name="Beausoleil S.A."/>
            <person name="Villen J."/>
            <person name="Haas W."/>
            <person name="Sowa M.E."/>
            <person name="Gygi S.P."/>
        </authorList>
    </citation>
    <scope>PHOSPHORYLATION [LARGE SCALE ANALYSIS] AT SER-21; SER-55; SER-75 AND SER-824</scope>
    <scope>PHOSPHORYLATION [LARGE SCALE ANALYSIS] AT SER-965 (ISOFORM 2)</scope>
    <scope>IDENTIFICATION BY MASS SPECTROMETRY [LARGE SCALE ANALYSIS]</scope>
    <source>
        <tissue>Brain</tissue>
        <tissue>Brown adipose tissue</tissue>
        <tissue>Heart</tissue>
        <tissue>Kidney</tissue>
        <tissue>Liver</tissue>
        <tissue>Lung</tissue>
        <tissue>Pancreas</tissue>
        <tissue>Spleen</tissue>
        <tissue>Testis</tissue>
    </source>
</reference>
<reference key="6">
    <citation type="journal article" date="2013" name="J. Cell Sci.">
        <title>Amotl2 interacts with LL5beta, localizes to podosomes and regulates postsynaptic differentiation in muscle.</title>
        <authorList>
            <person name="Proszynski T.J."/>
            <person name="Sanes J.R."/>
        </authorList>
    </citation>
    <scope>SUBCELLULAR LOCATION</scope>
</reference>
<reference key="7">
    <citation type="journal article" date="2013" name="Mol. Cell">
        <title>SIRT5-mediated lysine desuccinylation impacts diverse metabolic pathways.</title>
        <authorList>
            <person name="Park J."/>
            <person name="Chen Y."/>
            <person name="Tishkoff D.X."/>
            <person name="Peng C."/>
            <person name="Tan M."/>
            <person name="Dai L."/>
            <person name="Xie Z."/>
            <person name="Zhang Y."/>
            <person name="Zwaans B.M."/>
            <person name="Skinner M.E."/>
            <person name="Lombard D.B."/>
            <person name="Zhao Y."/>
        </authorList>
    </citation>
    <scope>ACETYLATION [LARGE SCALE ANALYSIS] AT LYS-10</scope>
    <scope>IDENTIFICATION BY MASS SPECTROMETRY [LARGE SCALE ANALYSIS]</scope>
    <source>
        <tissue>Embryonic fibroblast</tissue>
    </source>
</reference>
<organism>
    <name type="scientific">Mus musculus</name>
    <name type="common">Mouse</name>
    <dbReference type="NCBI Taxonomy" id="10090"/>
    <lineage>
        <taxon>Eukaryota</taxon>
        <taxon>Metazoa</taxon>
        <taxon>Chordata</taxon>
        <taxon>Craniata</taxon>
        <taxon>Vertebrata</taxon>
        <taxon>Euteleostomi</taxon>
        <taxon>Mammalia</taxon>
        <taxon>Eutheria</taxon>
        <taxon>Euarchontoglires</taxon>
        <taxon>Glires</taxon>
        <taxon>Rodentia</taxon>
        <taxon>Myomorpha</taxon>
        <taxon>Muroidea</taxon>
        <taxon>Muridae</taxon>
        <taxon>Murinae</taxon>
        <taxon>Mus</taxon>
        <taxon>Mus</taxon>
    </lineage>
</organism>
<keyword id="KW-0007">Acetylation</keyword>
<keyword id="KW-0025">Alternative splicing</keyword>
<keyword id="KW-0965">Cell junction</keyword>
<keyword id="KW-0966">Cell projection</keyword>
<keyword id="KW-0175">Coiled coil</keyword>
<keyword id="KW-0963">Cytoplasm</keyword>
<keyword id="KW-0206">Cytoskeleton</keyword>
<keyword id="KW-0333">Golgi apparatus</keyword>
<keyword id="KW-0472">Membrane</keyword>
<keyword id="KW-0597">Phosphoprotein</keyword>
<keyword id="KW-0653">Protein transport</keyword>
<keyword id="KW-1185">Reference proteome</keyword>
<keyword id="KW-0770">Synapse</keyword>
<keyword id="KW-0813">Transport</keyword>
<accession>Q99MI1</accession>
<accession>Q80TK7</accession>
<accession>Q8BPL1</accession>
<accession>Q8C7Y1</accession>
<accession>Q99MI2</accession>